<sequence length="187" mass="22191">MVKTVYVTGYKSFELNIFKDDAPEVHYLKQFIKHKIEQLLDEGLEWVLIQGQMGIELWTAEVVIELQRTYDSLKFAVITPFQGHTEKWNEHNQSKYANIIKHADYVDSIFHTSYQGPFQFKQADQFMLEHSDQTLLIYDEEQEASPKFFKQMLVDFMDKTNYTCDIVTFDELTAFINDLQWSEDQSF</sequence>
<evidence type="ECO:0000255" key="1">
    <source>
        <dbReference type="HAMAP-Rule" id="MF_01575"/>
    </source>
</evidence>
<name>Y1389_STAAS</name>
<comment type="similarity">
    <text evidence="1">Belongs to the UPF0398 family.</text>
</comment>
<gene>
    <name type="ordered locus">SAS1389</name>
</gene>
<accession>Q6G9B6</accession>
<organism>
    <name type="scientific">Staphylococcus aureus (strain MSSA476)</name>
    <dbReference type="NCBI Taxonomy" id="282459"/>
    <lineage>
        <taxon>Bacteria</taxon>
        <taxon>Bacillati</taxon>
        <taxon>Bacillota</taxon>
        <taxon>Bacilli</taxon>
        <taxon>Bacillales</taxon>
        <taxon>Staphylococcaceae</taxon>
        <taxon>Staphylococcus</taxon>
    </lineage>
</organism>
<reference key="1">
    <citation type="journal article" date="2004" name="Proc. Natl. Acad. Sci. U.S.A.">
        <title>Complete genomes of two clinical Staphylococcus aureus strains: evidence for the rapid evolution of virulence and drug resistance.</title>
        <authorList>
            <person name="Holden M.T.G."/>
            <person name="Feil E.J."/>
            <person name="Lindsay J.A."/>
            <person name="Peacock S.J."/>
            <person name="Day N.P.J."/>
            <person name="Enright M.C."/>
            <person name="Foster T.J."/>
            <person name="Moore C.E."/>
            <person name="Hurst L."/>
            <person name="Atkin R."/>
            <person name="Barron A."/>
            <person name="Bason N."/>
            <person name="Bentley S.D."/>
            <person name="Chillingworth C."/>
            <person name="Chillingworth T."/>
            <person name="Churcher C."/>
            <person name="Clark L."/>
            <person name="Corton C."/>
            <person name="Cronin A."/>
            <person name="Doggett J."/>
            <person name="Dowd L."/>
            <person name="Feltwell T."/>
            <person name="Hance Z."/>
            <person name="Harris B."/>
            <person name="Hauser H."/>
            <person name="Holroyd S."/>
            <person name="Jagels K."/>
            <person name="James K.D."/>
            <person name="Lennard N."/>
            <person name="Line A."/>
            <person name="Mayes R."/>
            <person name="Moule S."/>
            <person name="Mungall K."/>
            <person name="Ormond D."/>
            <person name="Quail M.A."/>
            <person name="Rabbinowitsch E."/>
            <person name="Rutherford K.M."/>
            <person name="Sanders M."/>
            <person name="Sharp S."/>
            <person name="Simmonds M."/>
            <person name="Stevens K."/>
            <person name="Whitehead S."/>
            <person name="Barrell B.G."/>
            <person name="Spratt B.G."/>
            <person name="Parkhill J."/>
        </authorList>
    </citation>
    <scope>NUCLEOTIDE SEQUENCE [LARGE SCALE GENOMIC DNA]</scope>
    <source>
        <strain>MSSA476</strain>
    </source>
</reference>
<proteinExistence type="inferred from homology"/>
<dbReference type="EMBL" id="BX571857">
    <property type="protein sequence ID" value="CAG43165.1"/>
    <property type="molecule type" value="Genomic_DNA"/>
</dbReference>
<dbReference type="RefSeq" id="WP_000241308.1">
    <property type="nucleotide sequence ID" value="NC_002953.3"/>
</dbReference>
<dbReference type="SMR" id="Q6G9B6"/>
<dbReference type="KEGG" id="sas:SAS1389"/>
<dbReference type="HOGENOM" id="CLU_105319_0_0_9"/>
<dbReference type="Gene3D" id="3.40.50.450">
    <property type="match status" value="1"/>
</dbReference>
<dbReference type="HAMAP" id="MF_01575">
    <property type="entry name" value="UPF0398"/>
    <property type="match status" value="1"/>
</dbReference>
<dbReference type="InterPro" id="IPR010697">
    <property type="entry name" value="YspA"/>
</dbReference>
<dbReference type="NCBIfam" id="NF010181">
    <property type="entry name" value="PRK13660.1"/>
    <property type="match status" value="1"/>
</dbReference>
<dbReference type="PANTHER" id="PTHR38440:SF1">
    <property type="entry name" value="UPF0398 PROTEIN SPR0331"/>
    <property type="match status" value="1"/>
</dbReference>
<dbReference type="PANTHER" id="PTHR38440">
    <property type="entry name" value="UPF0398 PROTEIN YPSA"/>
    <property type="match status" value="1"/>
</dbReference>
<dbReference type="Pfam" id="PF06908">
    <property type="entry name" value="YpsA"/>
    <property type="match status" value="1"/>
</dbReference>
<dbReference type="PIRSF" id="PIRSF021290">
    <property type="entry name" value="DUF1273"/>
    <property type="match status" value="1"/>
</dbReference>
<dbReference type="SUPFAM" id="SSF102405">
    <property type="entry name" value="MCP/YpsA-like"/>
    <property type="match status" value="1"/>
</dbReference>
<feature type="chain" id="PRO_0000267171" description="UPF0398 protein SAS1389">
    <location>
        <begin position="1"/>
        <end position="187"/>
    </location>
</feature>
<protein>
    <recommendedName>
        <fullName evidence="1">UPF0398 protein SAS1389</fullName>
    </recommendedName>
</protein>